<proteinExistence type="evidence at transcript level"/>
<accession>Q9DE25</accession>
<protein>
    <recommendedName>
        <fullName>Forkhead box C1-A</fullName>
    </recommendedName>
</protein>
<feature type="chain" id="PRO_0000419248" description="Forkhead box C1-A">
    <location>
        <begin position="1"/>
        <end position="476"/>
    </location>
</feature>
<feature type="DNA-binding region" description="Fork-head" evidence="3">
    <location>
        <begin position="74"/>
        <end position="168"/>
    </location>
</feature>
<feature type="region of interest" description="Disordered" evidence="4">
    <location>
        <begin position="169"/>
        <end position="271"/>
    </location>
</feature>
<feature type="region of interest" description="Disordered" evidence="4">
    <location>
        <begin position="284"/>
        <end position="303"/>
    </location>
</feature>
<feature type="compositionally biased region" description="Basic and acidic residues" evidence="4">
    <location>
        <begin position="173"/>
        <end position="188"/>
    </location>
</feature>
<feature type="compositionally biased region" description="Polar residues" evidence="4">
    <location>
        <begin position="217"/>
        <end position="233"/>
    </location>
</feature>
<feature type="compositionally biased region" description="Low complexity" evidence="4">
    <location>
        <begin position="240"/>
        <end position="259"/>
    </location>
</feature>
<feature type="compositionally biased region" description="Polar residues" evidence="4">
    <location>
        <begin position="284"/>
        <end position="296"/>
    </location>
</feature>
<sequence length="476" mass="52173">MQARYSVSSPNSLGVVPYISSDQSYYRAAAGGGYTGMPAPMTMYSHAAHDQYPASMARAYGPYTPQPQPKDMVKPPYSYIALITMAIQNSPDKKVTLNGIYQFIMERFPFYRDNKQGWQNSIRHNLSLNECFVKVPRDDKKPGKGSYWTLDPDSYNMFENGSFLRRRRRFKKKDAMKDKEDRGVKEAPSRQAQPQAREQEQSVPGSQPVRIQDIKTENGTSTPPQAVSPTLSTVPKIESPDSSSSMSSGSPHSIPSTRSLSLDSAGEQHHQAPAQGFSVDNIMTSLRGSPHSSGELTPSLVAPSRTGITPTLSLNYSPNQSSVYSSPCSQNSISTTSNATYHCNMQAMSLYAGGDRSGHLGTTATTVDETLPDYSITTTTSSLSHGNLSSAQEGHHPHQGRLASWYLNQAGDIGHLGATYPAQQQNFHSVREMFESQRIGLNNSPVNGNNSCQMSFPPSQPIYRTSGAFVYDCSKF</sequence>
<evidence type="ECO:0000250" key="1">
    <source>
        <dbReference type="UniProtKB" id="Q12948"/>
    </source>
</evidence>
<evidence type="ECO:0000250" key="2">
    <source>
        <dbReference type="UniProtKB" id="Q61572"/>
    </source>
</evidence>
<evidence type="ECO:0000255" key="3">
    <source>
        <dbReference type="PROSITE-ProRule" id="PRU00089"/>
    </source>
</evidence>
<evidence type="ECO:0000256" key="4">
    <source>
        <dbReference type="SAM" id="MobiDB-lite"/>
    </source>
</evidence>
<evidence type="ECO:0000269" key="5">
    <source>
    </source>
</evidence>
<evidence type="ECO:0000305" key="6"/>
<keyword id="KW-0238">DNA-binding</keyword>
<keyword id="KW-0539">Nucleus</keyword>
<keyword id="KW-1185">Reference proteome</keyword>
<keyword id="KW-0804">Transcription</keyword>
<keyword id="KW-0805">Transcription regulation</keyword>
<gene>
    <name type="primary">foxc1a</name>
    <name type="synonym">foxc1.1</name>
</gene>
<comment type="function">
    <text evidence="1 2">DNA-binding transcriptional factor that plays a role in a broad range of cellular and developmental processes such as eye, bones, cardiovascular, kidney and skin development. Acts either as a transcriptional activator or repressor. Binds to the consensus binding site 5'-[G/C][A/T]AAA[T/C]AA[A/C]-3' in promoter of target genes. Upon DNA-binding, promotes DNA bending. Required for cell viability and resistance to oxidative stress in the eye. Promotes cell growth inhibition by stopping the cell cycle in the G1 phase through TGFB1-mediated signals. Involved in epithelial-mesenchymal transition (EMT) induction by increasing cell proliferation, migration and invasion. Involved in chemokine-induced endothelial cell migration. Plays a role in epidermal keratinocyte terminal differentiation. Essential developmental transcriptional factor required for mesoderm-derived tissues formation, such as the somites, skin, bone and cartilage. Plays a role in the development and maintenance of mesenchymal niches for haematopoietic stem and progenitor cells (HSPC). Plays a role in corneal transparency by preventing both blood vessel and lymphatic vessel growth during embryonic development in a VEGF-dependent manner.</text>
</comment>
<comment type="subunit">
    <text evidence="6">Monomer.</text>
</comment>
<comment type="subcellular location">
    <subcellularLocation>
        <location evidence="2">Nucleus</location>
    </subcellularLocation>
</comment>
<comment type="developmental stage">
    <text evidence="5">First detected at the shield stage of gastrulation in the involuting mesendoderm with levels being highest in the paraxial mesoderm and decline laterally to become undetectable in the ventral mesoderm. Expression spreads in the hypoblast towards the animal pole and converges dorsally. At the tail bud stage (9.5 hpf), transcripts are seen in adaxial cells flanking the future notochord and in the presomitic mesoderm (PSM). During early somitogenesis, expression also extends into the future head, in two stripes continuous with the adaxial cells. Expression continues around the developing eye, presomitic mesoderm (PSM), trunk adaxial cells and somites. In late somatogenesis, expression in the presumptive pronephric primodia lateral to the second and third somite. In the early pharyngula stage, expressed in the perioptic mesoderm. Expression continues in the PSM and adaxial cells in the tail.</text>
</comment>
<reference key="1">
    <citation type="journal article" date="2001" name="Mech. Dev.">
        <title>Sequence and expression of zebrafish foxc1a and foxc1b, encoding conserved forkhead/winged helix transcription factors.</title>
        <authorList>
            <person name="Topczewska J.M."/>
            <person name="Topczewski J."/>
            <person name="Solnica-Krezel L."/>
            <person name="Hogan B.L."/>
        </authorList>
    </citation>
    <scope>NUCLEOTIDE SEQUENCE [GENOMIC DNA]</scope>
    <scope>DEVELOPMENTAL STAGE</scope>
</reference>
<reference key="2">
    <citation type="journal article" date="2013" name="Nature">
        <title>The zebrafish reference genome sequence and its relationship to the human genome.</title>
        <authorList>
            <person name="Howe K."/>
            <person name="Clark M.D."/>
            <person name="Torroja C.F."/>
            <person name="Torrance J."/>
            <person name="Berthelot C."/>
            <person name="Muffato M."/>
            <person name="Collins J.E."/>
            <person name="Humphray S."/>
            <person name="McLaren K."/>
            <person name="Matthews L."/>
            <person name="McLaren S."/>
            <person name="Sealy I."/>
            <person name="Caccamo M."/>
            <person name="Churcher C."/>
            <person name="Scott C."/>
            <person name="Barrett J.C."/>
            <person name="Koch R."/>
            <person name="Rauch G.J."/>
            <person name="White S."/>
            <person name="Chow W."/>
            <person name="Kilian B."/>
            <person name="Quintais L.T."/>
            <person name="Guerra-Assuncao J.A."/>
            <person name="Zhou Y."/>
            <person name="Gu Y."/>
            <person name="Yen J."/>
            <person name="Vogel J.H."/>
            <person name="Eyre T."/>
            <person name="Redmond S."/>
            <person name="Banerjee R."/>
            <person name="Chi J."/>
            <person name="Fu B."/>
            <person name="Langley E."/>
            <person name="Maguire S.F."/>
            <person name="Laird G.K."/>
            <person name="Lloyd D."/>
            <person name="Kenyon E."/>
            <person name="Donaldson S."/>
            <person name="Sehra H."/>
            <person name="Almeida-King J."/>
            <person name="Loveland J."/>
            <person name="Trevanion S."/>
            <person name="Jones M."/>
            <person name="Quail M."/>
            <person name="Willey D."/>
            <person name="Hunt A."/>
            <person name="Burton J."/>
            <person name="Sims S."/>
            <person name="McLay K."/>
            <person name="Plumb B."/>
            <person name="Davis J."/>
            <person name="Clee C."/>
            <person name="Oliver K."/>
            <person name="Clark R."/>
            <person name="Riddle C."/>
            <person name="Elliot D."/>
            <person name="Threadgold G."/>
            <person name="Harden G."/>
            <person name="Ware D."/>
            <person name="Begum S."/>
            <person name="Mortimore B."/>
            <person name="Kerry G."/>
            <person name="Heath P."/>
            <person name="Phillimore B."/>
            <person name="Tracey A."/>
            <person name="Corby N."/>
            <person name="Dunn M."/>
            <person name="Johnson C."/>
            <person name="Wood J."/>
            <person name="Clark S."/>
            <person name="Pelan S."/>
            <person name="Griffiths G."/>
            <person name="Smith M."/>
            <person name="Glithero R."/>
            <person name="Howden P."/>
            <person name="Barker N."/>
            <person name="Lloyd C."/>
            <person name="Stevens C."/>
            <person name="Harley J."/>
            <person name="Holt K."/>
            <person name="Panagiotidis G."/>
            <person name="Lovell J."/>
            <person name="Beasley H."/>
            <person name="Henderson C."/>
            <person name="Gordon D."/>
            <person name="Auger K."/>
            <person name="Wright D."/>
            <person name="Collins J."/>
            <person name="Raisen C."/>
            <person name="Dyer L."/>
            <person name="Leung K."/>
            <person name="Robertson L."/>
            <person name="Ambridge K."/>
            <person name="Leongamornlert D."/>
            <person name="McGuire S."/>
            <person name="Gilderthorp R."/>
            <person name="Griffiths C."/>
            <person name="Manthravadi D."/>
            <person name="Nichol S."/>
            <person name="Barker G."/>
            <person name="Whitehead S."/>
            <person name="Kay M."/>
            <person name="Brown J."/>
            <person name="Murnane C."/>
            <person name="Gray E."/>
            <person name="Humphries M."/>
            <person name="Sycamore N."/>
            <person name="Barker D."/>
            <person name="Saunders D."/>
            <person name="Wallis J."/>
            <person name="Babbage A."/>
            <person name="Hammond S."/>
            <person name="Mashreghi-Mohammadi M."/>
            <person name="Barr L."/>
            <person name="Martin S."/>
            <person name="Wray P."/>
            <person name="Ellington A."/>
            <person name="Matthews N."/>
            <person name="Ellwood M."/>
            <person name="Woodmansey R."/>
            <person name="Clark G."/>
            <person name="Cooper J."/>
            <person name="Tromans A."/>
            <person name="Grafham D."/>
            <person name="Skuce C."/>
            <person name="Pandian R."/>
            <person name="Andrews R."/>
            <person name="Harrison E."/>
            <person name="Kimberley A."/>
            <person name="Garnett J."/>
            <person name="Fosker N."/>
            <person name="Hall R."/>
            <person name="Garner P."/>
            <person name="Kelly D."/>
            <person name="Bird C."/>
            <person name="Palmer S."/>
            <person name="Gehring I."/>
            <person name="Berger A."/>
            <person name="Dooley C.M."/>
            <person name="Ersan-Urun Z."/>
            <person name="Eser C."/>
            <person name="Geiger H."/>
            <person name="Geisler M."/>
            <person name="Karotki L."/>
            <person name="Kirn A."/>
            <person name="Konantz J."/>
            <person name="Konantz M."/>
            <person name="Oberlander M."/>
            <person name="Rudolph-Geiger S."/>
            <person name="Teucke M."/>
            <person name="Lanz C."/>
            <person name="Raddatz G."/>
            <person name="Osoegawa K."/>
            <person name="Zhu B."/>
            <person name="Rapp A."/>
            <person name="Widaa S."/>
            <person name="Langford C."/>
            <person name="Yang F."/>
            <person name="Schuster S.C."/>
            <person name="Carter N.P."/>
            <person name="Harrow J."/>
            <person name="Ning Z."/>
            <person name="Herrero J."/>
            <person name="Searle S.M."/>
            <person name="Enright A."/>
            <person name="Geisler R."/>
            <person name="Plasterk R.H."/>
            <person name="Lee C."/>
            <person name="Westerfield M."/>
            <person name="de Jong P.J."/>
            <person name="Zon L.I."/>
            <person name="Postlethwait J.H."/>
            <person name="Nusslein-Volhard C."/>
            <person name="Hubbard T.J."/>
            <person name="Roest Crollius H."/>
            <person name="Rogers J."/>
            <person name="Stemple D.L."/>
        </authorList>
    </citation>
    <scope>NUCLEOTIDE SEQUENCE [LARGE SCALE GENOMIC DNA]</scope>
    <source>
        <strain>Tuebingen</strain>
    </source>
</reference>
<reference key="3">
    <citation type="submission" date="2003-06" db="EMBL/GenBank/DDBJ databases">
        <authorList>
            <consortium name="NIH - Zebrafish Gene Collection (ZGC) project"/>
        </authorList>
    </citation>
    <scope>NUCLEOTIDE SEQUENCE [LARGE SCALE MRNA]</scope>
    <source>
        <tissue>Embryo</tissue>
    </source>
</reference>
<dbReference type="EMBL" id="CU929125">
    <property type="status" value="NOT_ANNOTATED_CDS"/>
    <property type="molecule type" value="Genomic_DNA"/>
</dbReference>
<dbReference type="EMBL" id="AF219949">
    <property type="protein sequence ID" value="AAG44241.1"/>
    <property type="molecule type" value="Genomic_DNA"/>
</dbReference>
<dbReference type="EMBL" id="BC053129">
    <property type="protein sequence ID" value="AAH53129.1"/>
    <property type="molecule type" value="mRNA"/>
</dbReference>
<dbReference type="RefSeq" id="NP_571803.1">
    <property type="nucleotide sequence ID" value="NM_131728.3"/>
</dbReference>
<dbReference type="SMR" id="Q9DE25"/>
<dbReference type="BioGRID" id="928993">
    <property type="interactions" value="1"/>
</dbReference>
<dbReference type="FunCoup" id="Q9DE25">
    <property type="interactions" value="21"/>
</dbReference>
<dbReference type="STRING" id="7955.ENSDARP00000105372"/>
<dbReference type="PaxDb" id="7955-ENSDARP00000105372"/>
<dbReference type="Ensembl" id="ENSDART00000122732">
    <property type="protein sequence ID" value="ENSDARP00000105372"/>
    <property type="gene ID" value="ENSDARG00000091481"/>
</dbReference>
<dbReference type="GeneID" id="100148408"/>
<dbReference type="KEGG" id="dre:100148408"/>
<dbReference type="AGR" id="ZFIN:ZDB-GENE-010302-1"/>
<dbReference type="CTD" id="100148408"/>
<dbReference type="ZFIN" id="ZDB-GENE-010302-1">
    <property type="gene designation" value="foxc1a"/>
</dbReference>
<dbReference type="eggNOG" id="KOG2294">
    <property type="taxonomic scope" value="Eukaryota"/>
</dbReference>
<dbReference type="HOGENOM" id="CLU_035722_3_1_1"/>
<dbReference type="InParanoid" id="Q9DE25"/>
<dbReference type="OMA" id="TSWYLNQ"/>
<dbReference type="OrthoDB" id="5954824at2759"/>
<dbReference type="PhylomeDB" id="Q9DE25"/>
<dbReference type="TreeFam" id="TF316127"/>
<dbReference type="PRO" id="PR:Q9DE25"/>
<dbReference type="Proteomes" id="UP000000437">
    <property type="component" value="Chromosome 2"/>
</dbReference>
<dbReference type="Bgee" id="ENSDARG00000091481">
    <property type="expression patterns" value="Expressed in presomitic mesoderm and 58 other cell types or tissues"/>
</dbReference>
<dbReference type="GO" id="GO:0005634">
    <property type="term" value="C:nucleus"/>
    <property type="evidence" value="ECO:0007669"/>
    <property type="project" value="UniProtKB-SubCell"/>
</dbReference>
<dbReference type="GO" id="GO:0003682">
    <property type="term" value="F:chromatin binding"/>
    <property type="evidence" value="ECO:0000314"/>
    <property type="project" value="ZFIN"/>
</dbReference>
<dbReference type="GO" id="GO:0000981">
    <property type="term" value="F:DNA-binding transcription factor activity, RNA polymerase II-specific"/>
    <property type="evidence" value="ECO:0000318"/>
    <property type="project" value="GO_Central"/>
</dbReference>
<dbReference type="GO" id="GO:0000978">
    <property type="term" value="F:RNA polymerase II cis-regulatory region sequence-specific DNA binding"/>
    <property type="evidence" value="ECO:0000318"/>
    <property type="project" value="GO_Central"/>
</dbReference>
<dbReference type="GO" id="GO:0030325">
    <property type="term" value="P:adrenal gland development"/>
    <property type="evidence" value="ECO:0000316"/>
    <property type="project" value="ZFIN"/>
</dbReference>
<dbReference type="GO" id="GO:0009653">
    <property type="term" value="P:anatomical structure morphogenesis"/>
    <property type="evidence" value="ECO:0000318"/>
    <property type="project" value="GO_Central"/>
</dbReference>
<dbReference type="GO" id="GO:0001568">
    <property type="term" value="P:blood vessel development"/>
    <property type="evidence" value="ECO:0000316"/>
    <property type="project" value="ZFIN"/>
</dbReference>
<dbReference type="GO" id="GO:0043010">
    <property type="term" value="P:camera-type eye development"/>
    <property type="evidence" value="ECO:0000316"/>
    <property type="project" value="ZFIN"/>
</dbReference>
<dbReference type="GO" id="GO:0051216">
    <property type="term" value="P:cartilage development"/>
    <property type="evidence" value="ECO:0000315"/>
    <property type="project" value="ZFIN"/>
</dbReference>
<dbReference type="GO" id="GO:0030154">
    <property type="term" value="P:cell differentiation"/>
    <property type="evidence" value="ECO:0000318"/>
    <property type="project" value="GO_Central"/>
</dbReference>
<dbReference type="GO" id="GO:0061300">
    <property type="term" value="P:cerebellum vasculature development"/>
    <property type="evidence" value="ECO:0000316"/>
    <property type="project" value="ZFIN"/>
</dbReference>
<dbReference type="GO" id="GO:0061386">
    <property type="term" value="P:closure of optic fissure"/>
    <property type="evidence" value="ECO:0000315"/>
    <property type="project" value="ZFIN"/>
</dbReference>
<dbReference type="GO" id="GO:0061371">
    <property type="term" value="P:determination of heart left/right asymmetry"/>
    <property type="evidence" value="ECO:0000315"/>
    <property type="project" value="ZFIN"/>
</dbReference>
<dbReference type="GO" id="GO:0007368">
    <property type="term" value="P:determination of left/right symmetry"/>
    <property type="evidence" value="ECO:0000315"/>
    <property type="project" value="ZFIN"/>
</dbReference>
<dbReference type="GO" id="GO:0071910">
    <property type="term" value="P:determination of liver left/right asymmetry"/>
    <property type="evidence" value="ECO:0000316"/>
    <property type="project" value="ZFIN"/>
</dbReference>
<dbReference type="GO" id="GO:0035469">
    <property type="term" value="P:determination of pancreatic left/right asymmetry"/>
    <property type="evidence" value="ECO:0000316"/>
    <property type="project" value="ZFIN"/>
</dbReference>
<dbReference type="GO" id="GO:0060059">
    <property type="term" value="P:embryonic retina morphogenesis in camera-type eye"/>
    <property type="evidence" value="ECO:0000316"/>
    <property type="project" value="ZFIN"/>
</dbReference>
<dbReference type="GO" id="GO:0007507">
    <property type="term" value="P:heart development"/>
    <property type="evidence" value="ECO:0000315"/>
    <property type="project" value="ZFIN"/>
</dbReference>
<dbReference type="GO" id="GO:0008045">
    <property type="term" value="P:motor neuron axon guidance"/>
    <property type="evidence" value="ECO:0000315"/>
    <property type="project" value="ZFIN"/>
</dbReference>
<dbReference type="GO" id="GO:0048387">
    <property type="term" value="P:negative regulation of retinoic acid receptor signaling pathway"/>
    <property type="evidence" value="ECO:0000315"/>
    <property type="project" value="ZFIN"/>
</dbReference>
<dbReference type="GO" id="GO:0001755">
    <property type="term" value="P:neural crest cell migration"/>
    <property type="evidence" value="ECO:0000316"/>
    <property type="project" value="ZFIN"/>
</dbReference>
<dbReference type="GO" id="GO:0033339">
    <property type="term" value="P:pectoral fin development"/>
    <property type="evidence" value="ECO:0000315"/>
    <property type="project" value="ZFIN"/>
</dbReference>
<dbReference type="GO" id="GO:0072149">
    <property type="term" value="P:podocyte cell fate commitment"/>
    <property type="evidence" value="ECO:0000316"/>
    <property type="project" value="ZFIN"/>
</dbReference>
<dbReference type="GO" id="GO:0072015">
    <property type="term" value="P:podocyte development"/>
    <property type="evidence" value="ECO:0000315"/>
    <property type="project" value="ZFIN"/>
</dbReference>
<dbReference type="GO" id="GO:0039021">
    <property type="term" value="P:pronephric glomerulus development"/>
    <property type="evidence" value="ECO:0000316"/>
    <property type="project" value="ZFIN"/>
</dbReference>
<dbReference type="GO" id="GO:0030500">
    <property type="term" value="P:regulation of bone mineralization"/>
    <property type="evidence" value="ECO:0000315"/>
    <property type="project" value="ZFIN"/>
</dbReference>
<dbReference type="GO" id="GO:0040036">
    <property type="term" value="P:regulation of fibroblast growth factor receptor signaling pathway"/>
    <property type="evidence" value="ECO:0000315"/>
    <property type="project" value="ZFIN"/>
</dbReference>
<dbReference type="GO" id="GO:0008593">
    <property type="term" value="P:regulation of Notch signaling pathway"/>
    <property type="evidence" value="ECO:0000315"/>
    <property type="project" value="ZFIN"/>
</dbReference>
<dbReference type="GO" id="GO:2000583">
    <property type="term" value="P:regulation of platelet-derived growth factor receptor-alpha signaling pathway"/>
    <property type="evidence" value="ECO:0000316"/>
    <property type="project" value="ZFIN"/>
</dbReference>
<dbReference type="GO" id="GO:0006357">
    <property type="term" value="P:regulation of transcription by RNA polymerase II"/>
    <property type="evidence" value="ECO:0000318"/>
    <property type="project" value="GO_Central"/>
</dbReference>
<dbReference type="GO" id="GO:0043114">
    <property type="term" value="P:regulation of vascular permeability"/>
    <property type="evidence" value="ECO:0000316"/>
    <property type="project" value="ZFIN"/>
</dbReference>
<dbReference type="GO" id="GO:0001756">
    <property type="term" value="P:somitogenesis"/>
    <property type="evidence" value="ECO:0000315"/>
    <property type="project" value="ZFIN"/>
</dbReference>
<dbReference type="GO" id="GO:0035886">
    <property type="term" value="P:vascular associated smooth muscle cell differentiation"/>
    <property type="evidence" value="ECO:0000315"/>
    <property type="project" value="ZFIN"/>
</dbReference>
<dbReference type="GO" id="GO:0001944">
    <property type="term" value="P:vasculature development"/>
    <property type="evidence" value="ECO:0000315"/>
    <property type="project" value="ZFIN"/>
</dbReference>
<dbReference type="CDD" id="cd20044">
    <property type="entry name" value="FH_FOXC1"/>
    <property type="match status" value="1"/>
</dbReference>
<dbReference type="FunFam" id="1.10.10.10:FF:000016">
    <property type="entry name" value="Forkhead box protein I1"/>
    <property type="match status" value="1"/>
</dbReference>
<dbReference type="Gene3D" id="1.10.10.10">
    <property type="entry name" value="Winged helix-like DNA-binding domain superfamily/Winged helix DNA-binding domain"/>
    <property type="match status" value="1"/>
</dbReference>
<dbReference type="InterPro" id="IPR001766">
    <property type="entry name" value="Fork_head_dom"/>
</dbReference>
<dbReference type="InterPro" id="IPR050211">
    <property type="entry name" value="FOX_domain-containing"/>
</dbReference>
<dbReference type="InterPro" id="IPR047391">
    <property type="entry name" value="FOXC1/C2-like_FH"/>
</dbReference>
<dbReference type="InterPro" id="IPR018122">
    <property type="entry name" value="TF_fork_head_CS_1"/>
</dbReference>
<dbReference type="InterPro" id="IPR030456">
    <property type="entry name" value="TF_fork_head_CS_2"/>
</dbReference>
<dbReference type="InterPro" id="IPR036388">
    <property type="entry name" value="WH-like_DNA-bd_sf"/>
</dbReference>
<dbReference type="InterPro" id="IPR036390">
    <property type="entry name" value="WH_DNA-bd_sf"/>
</dbReference>
<dbReference type="PANTHER" id="PTHR11829">
    <property type="entry name" value="FORKHEAD BOX PROTEIN"/>
    <property type="match status" value="1"/>
</dbReference>
<dbReference type="PANTHER" id="PTHR11829:SF68">
    <property type="entry name" value="FORKHEAD BOX PROTEIN C1"/>
    <property type="match status" value="1"/>
</dbReference>
<dbReference type="Pfam" id="PF00250">
    <property type="entry name" value="Forkhead"/>
    <property type="match status" value="1"/>
</dbReference>
<dbReference type="PRINTS" id="PR00053">
    <property type="entry name" value="FORKHEAD"/>
</dbReference>
<dbReference type="SMART" id="SM00339">
    <property type="entry name" value="FH"/>
    <property type="match status" value="1"/>
</dbReference>
<dbReference type="SUPFAM" id="SSF46785">
    <property type="entry name" value="Winged helix' DNA-binding domain"/>
    <property type="match status" value="1"/>
</dbReference>
<dbReference type="PROSITE" id="PS00657">
    <property type="entry name" value="FORK_HEAD_1"/>
    <property type="match status" value="1"/>
</dbReference>
<dbReference type="PROSITE" id="PS00658">
    <property type="entry name" value="FORK_HEAD_2"/>
    <property type="match status" value="1"/>
</dbReference>
<dbReference type="PROSITE" id="PS50039">
    <property type="entry name" value="FORK_HEAD_3"/>
    <property type="match status" value="1"/>
</dbReference>
<name>FXC1A_DANRE</name>
<organism>
    <name type="scientific">Danio rerio</name>
    <name type="common">Zebrafish</name>
    <name type="synonym">Brachydanio rerio</name>
    <dbReference type="NCBI Taxonomy" id="7955"/>
    <lineage>
        <taxon>Eukaryota</taxon>
        <taxon>Metazoa</taxon>
        <taxon>Chordata</taxon>
        <taxon>Craniata</taxon>
        <taxon>Vertebrata</taxon>
        <taxon>Euteleostomi</taxon>
        <taxon>Actinopterygii</taxon>
        <taxon>Neopterygii</taxon>
        <taxon>Teleostei</taxon>
        <taxon>Ostariophysi</taxon>
        <taxon>Cypriniformes</taxon>
        <taxon>Danionidae</taxon>
        <taxon>Danioninae</taxon>
        <taxon>Danio</taxon>
    </lineage>
</organism>